<comment type="function">
    <text>Mitochondrial membrane ATP synthase (F(1)F(0) ATP synthase or Complex V) produces ATP from ADP in the presence of a proton gradient across the membrane which is generated by electron transport complexes of the respiratory chain. F-type ATPases consist of two structural domains, F(1) - containing the extramembraneous catalytic core, and F(0) - containing the membrane proton channel, linked together by a central stalk and a peripheral stalk. During catalysis, ATP synthesis in the catalytic domain of F(1) is coupled via a rotary mechanism of the central stalk subunits to proton translocation. Part of the complex F(1) domain and of the central stalk which is part of the complex rotary element. Rotation of the central stalk against the surrounding alpha(3)beta(3) subunits leads to hydrolysis of ATP in three separate catalytic sites on the beta subunits.</text>
</comment>
<comment type="subunit">
    <text>F-type ATPases have 2 components, CF(1) - the catalytic core - and CF(0) - the membrane proton channel. CF(1) has five subunits: alpha(3), beta(3), gamma(1), delta(1), epsilon(1). CF(0) has three main subunits: a, b and c.</text>
</comment>
<comment type="subcellular location">
    <subcellularLocation>
        <location>Mitochondrion</location>
    </subcellularLocation>
    <subcellularLocation>
        <location>Mitochondrion inner membrane</location>
    </subcellularLocation>
</comment>
<comment type="similarity">
    <text evidence="2">Belongs to the eukaryotic ATPase epsilon family.</text>
</comment>
<proteinExistence type="evidence at protein level"/>
<reference key="1">
    <citation type="journal article" date="1993" name="J. Biol. Chem.">
        <title>Molecular cloning and characterization of cDNAs for the gamma- and epsilon-subunits of mitochondrial F1F0 ATP synthase from the sweet potato.</title>
        <authorList>
            <person name="Morikami A."/>
            <person name="Ehara G."/>
            <person name="Yuuki K."/>
            <person name="Nakamura K."/>
        </authorList>
    </citation>
    <scope>NUCLEOTIDE SEQUENCE [MRNA]</scope>
    <source>
        <strain>cv. Kokei No. 14</strain>
        <tissue>Petiole</tissue>
    </source>
</reference>
<reference key="2">
    <citation type="journal article" date="1989" name="J. Biol. Chem.">
        <title>Correspondence of minor subunits of plant mitochondrial F1ATPase to F1F0ATPase subunits of other organisms.</title>
        <authorList>
            <person name="Kimura T."/>
            <person name="Nakamura K."/>
            <person name="Kajiura H."/>
            <person name="Hattori H."/>
            <person name="Nelson N."/>
            <person name="Asahi T."/>
        </authorList>
    </citation>
    <scope>PROTEIN SEQUENCE OF 2-36</scope>
    <source>
        <strain>cv. Kokei No. 14</strain>
        <tissue>Tuberous root</tissue>
    </source>
</reference>
<protein>
    <recommendedName>
        <fullName>ATP synthase subunit epsilon, mitochondrial</fullName>
        <shortName>ATPase subunit epsilon</shortName>
    </recommendedName>
</protein>
<accession>Q06450</accession>
<sequence length="70" mass="7928">MASNAAVPFWRAAGMTYITYSNLCANMVRNCLKEPYRAEALSREKVHFSFSKWVDGKPQKPAIRSDTGEE</sequence>
<organism>
    <name type="scientific">Ipomoea batatas</name>
    <name type="common">Sweet potato</name>
    <name type="synonym">Convolvulus batatas</name>
    <dbReference type="NCBI Taxonomy" id="4120"/>
    <lineage>
        <taxon>Eukaryota</taxon>
        <taxon>Viridiplantae</taxon>
        <taxon>Streptophyta</taxon>
        <taxon>Embryophyta</taxon>
        <taxon>Tracheophyta</taxon>
        <taxon>Spermatophyta</taxon>
        <taxon>Magnoliopsida</taxon>
        <taxon>eudicotyledons</taxon>
        <taxon>Gunneridae</taxon>
        <taxon>Pentapetalae</taxon>
        <taxon>asterids</taxon>
        <taxon>lamiids</taxon>
        <taxon>Solanales</taxon>
        <taxon>Convolvulaceae</taxon>
        <taxon>Ipomoeeae</taxon>
        <taxon>Ipomoea</taxon>
    </lineage>
</organism>
<keyword id="KW-0066">ATP synthesis</keyword>
<keyword id="KW-0139">CF(1)</keyword>
<keyword id="KW-0903">Direct protein sequencing</keyword>
<keyword id="KW-0375">Hydrogen ion transport</keyword>
<keyword id="KW-0406">Ion transport</keyword>
<keyword id="KW-0472">Membrane</keyword>
<keyword id="KW-0496">Mitochondrion</keyword>
<keyword id="KW-0999">Mitochondrion inner membrane</keyword>
<keyword id="KW-0813">Transport</keyword>
<evidence type="ECO:0000269" key="1">
    <source>
    </source>
</evidence>
<evidence type="ECO:0000305" key="2"/>
<dbReference type="EMBL" id="D14700">
    <property type="protein sequence ID" value="BAA03527.1"/>
    <property type="molecule type" value="mRNA"/>
</dbReference>
<dbReference type="PIR" id="B47493">
    <property type="entry name" value="B47493"/>
</dbReference>
<dbReference type="SMR" id="Q06450"/>
<dbReference type="GO" id="GO:0005743">
    <property type="term" value="C:mitochondrial inner membrane"/>
    <property type="evidence" value="ECO:0007669"/>
    <property type="project" value="UniProtKB-SubCell"/>
</dbReference>
<dbReference type="GO" id="GO:0045259">
    <property type="term" value="C:proton-transporting ATP synthase complex"/>
    <property type="evidence" value="ECO:0007669"/>
    <property type="project" value="UniProtKB-KW"/>
</dbReference>
<dbReference type="GO" id="GO:0046933">
    <property type="term" value="F:proton-transporting ATP synthase activity, rotational mechanism"/>
    <property type="evidence" value="ECO:0007669"/>
    <property type="project" value="InterPro"/>
</dbReference>
<dbReference type="GO" id="GO:0042776">
    <property type="term" value="P:proton motive force-driven mitochondrial ATP synthesis"/>
    <property type="evidence" value="ECO:0007669"/>
    <property type="project" value="TreeGrafter"/>
</dbReference>
<dbReference type="CDD" id="cd12153">
    <property type="entry name" value="F1-ATPase_epsilon"/>
    <property type="match status" value="1"/>
</dbReference>
<dbReference type="FunFam" id="1.10.1620.20:FF:000002">
    <property type="entry name" value="ATP synthase subunit epsilon, mitochondrial"/>
    <property type="match status" value="1"/>
</dbReference>
<dbReference type="Gene3D" id="1.10.1620.20">
    <property type="entry name" value="ATP synthase, F1 complex, epsilon subunit superfamily, mitochondrial"/>
    <property type="match status" value="1"/>
</dbReference>
<dbReference type="InterPro" id="IPR006721">
    <property type="entry name" value="ATP_synth_F1_esu_mt"/>
</dbReference>
<dbReference type="InterPro" id="IPR036742">
    <property type="entry name" value="ATP_synth_F1_esu_sf_mt"/>
</dbReference>
<dbReference type="PANTHER" id="PTHR12448">
    <property type="entry name" value="ATP SYNTHASE EPSILON CHAIN, MITOCHONDRIAL"/>
    <property type="match status" value="1"/>
</dbReference>
<dbReference type="PANTHER" id="PTHR12448:SF0">
    <property type="entry name" value="ATP SYNTHASE SUBUNIT EPSILON, MITOCHONDRIAL"/>
    <property type="match status" value="1"/>
</dbReference>
<dbReference type="Pfam" id="PF04627">
    <property type="entry name" value="ATP-synt_Eps"/>
    <property type="match status" value="1"/>
</dbReference>
<dbReference type="SUPFAM" id="SSF48690">
    <property type="entry name" value="Epsilon subunit of mitochondrial F1F0-ATP synthase"/>
    <property type="match status" value="1"/>
</dbReference>
<name>ATP5E_IPOBA</name>
<feature type="initiator methionine" description="Removed" evidence="1">
    <location>
        <position position="1"/>
    </location>
</feature>
<feature type="chain" id="PRO_0000071669" description="ATP synthase subunit epsilon, mitochondrial">
    <location>
        <begin position="2"/>
        <end position="70"/>
    </location>
</feature>
<feature type="sequence conflict" description="In Ref. 2; AA sequence." evidence="2" ref="2">
    <original>W</original>
    <variation>S</variation>
    <location>
        <position position="10"/>
    </location>
</feature>